<sequence length="632" mass="71828">MMQIKRLLCKSCGLGTLLVAVVWLLALLFYSHSLRSSIRSAGWRIDEGNATPRAELSYQARVTVGCTPNASITTGESPAAPKPPSDPEQLELLGVVRNKQDKYIRDIGYKHHAFNALVSNNIGLFRAIPDTRHKVCDRQETTEAENLPQASIVMCFYNEHKMTLMRSIKTVLERTPSYLLREIILVDDHSDLPELEFHLHGDLRARLKYDNLRYIKNEQREGLIRSRVIGAREAVGDVLVFLDSHIEVNQQWLEPLLRLIKSENATLAVPVIDLINADTFEYTPSPLVRGGFNWGLHFRWENLPEGTLKVPEDFRGPFRSPTMAGGLFAVNRKYFQHLGEYDMAMDIWGGENIEISFRAWQCGGAIKIVPCSRVGHIFRKRRPYTSPDGANTMLKNSLRLAHVWMDQYKDYYLKHEKVPKTYDYGDISDRLKLRERLQCRDFAWYLKNVYPELHVPGEESKKSAAAPIFQPWHSRKRNYVDTFQLRLTGTELCAAVVAPKVKGFWKKGSSLQLQTCRRTPNQLWYETEKAEIVLDKLLCLEASGDAQVTVNKCHEMLGDQQWRHTRNANSPVYNMAKGTCLRAAAPTTGALISLDLCSKSNGAGGSWDIVQLKKPTEAEGRAKEARNSDKAL</sequence>
<evidence type="ECO:0000250" key="1"/>
<evidence type="ECO:0000255" key="2"/>
<evidence type="ECO:0000255" key="3">
    <source>
        <dbReference type="PROSITE-ProRule" id="PRU00174"/>
    </source>
</evidence>
<evidence type="ECO:0000269" key="4">
    <source>
    </source>
</evidence>
<evidence type="ECO:0000269" key="5">
    <source>
    </source>
</evidence>
<evidence type="ECO:0000269" key="6">
    <source>
    </source>
</evidence>
<evidence type="ECO:0000269" key="7">
    <source>
    </source>
</evidence>
<evidence type="ECO:0000269" key="8">
    <source>
    </source>
</evidence>
<evidence type="ECO:0000269" key="9">
    <source>
    </source>
</evidence>
<evidence type="ECO:0000269" key="10">
    <source>
    </source>
</evidence>
<evidence type="ECO:0000269" key="11">
    <source>
    </source>
</evidence>
<evidence type="ECO:0000305" key="12"/>
<evidence type="ECO:0000305" key="13">
    <source>
    </source>
</evidence>
<evidence type="ECO:0000305" key="14">
    <source>
    </source>
</evidence>
<evidence type="ECO:0000305" key="15">
    <source>
    </source>
</evidence>
<evidence type="ECO:0000305" key="16">
    <source>
    </source>
</evidence>
<evidence type="ECO:0000312" key="17">
    <source>
        <dbReference type="FlyBase" id="FBgn0001970"/>
    </source>
</evidence>
<gene>
    <name evidence="17" type="primary">Pgant35A</name>
    <name evidence="17" type="ORF">CG7480</name>
</gene>
<feature type="chain" id="PRO_0000059168" description="Polypeptide N-acetylgalactosaminyltransferase 35A">
    <location>
        <begin position="1"/>
        <end position="632"/>
    </location>
</feature>
<feature type="topological domain" description="Cytoplasmic" evidence="2">
    <location>
        <begin position="1"/>
        <end position="6"/>
    </location>
</feature>
<feature type="transmembrane region" description="Helical; Signal-anchor for type II membrane protein" evidence="2">
    <location>
        <begin position="7"/>
        <end position="29"/>
    </location>
</feature>
<feature type="topological domain" description="Lumenal" evidence="2">
    <location>
        <begin position="30"/>
        <end position="632"/>
    </location>
</feature>
<feature type="domain" description="Ricin B-type lectin" evidence="3">
    <location>
        <begin position="526"/>
        <end position="632"/>
    </location>
</feature>
<feature type="region of interest" description="Catalytic subdomain A">
    <location>
        <begin position="147"/>
        <end position="259"/>
    </location>
</feature>
<feature type="region of interest" description="Catalytic subdomain B">
    <location>
        <begin position="317"/>
        <end position="379"/>
    </location>
</feature>
<feature type="binding site" evidence="1">
    <location>
        <position position="188"/>
    </location>
    <ligand>
        <name>substrate</name>
    </ligand>
</feature>
<feature type="binding site" evidence="1">
    <location>
        <position position="220"/>
    </location>
    <ligand>
        <name>substrate</name>
    </ligand>
</feature>
<feature type="binding site" evidence="1">
    <location>
        <position position="243"/>
    </location>
    <ligand>
        <name>Mn(2+)</name>
        <dbReference type="ChEBI" id="CHEBI:29035"/>
    </ligand>
</feature>
<feature type="binding site" evidence="1">
    <location>
        <position position="244"/>
    </location>
    <ligand>
        <name>substrate</name>
    </ligand>
</feature>
<feature type="binding site" evidence="1">
    <location>
        <position position="245"/>
    </location>
    <ligand>
        <name>Mn(2+)</name>
        <dbReference type="ChEBI" id="CHEBI:29035"/>
    </ligand>
</feature>
<feature type="binding site" evidence="1">
    <location>
        <position position="348"/>
    </location>
    <ligand>
        <name>substrate</name>
    </ligand>
</feature>
<feature type="binding site" evidence="1">
    <location>
        <position position="376"/>
    </location>
    <ligand>
        <name>Mn(2+)</name>
        <dbReference type="ChEBI" id="CHEBI:29035"/>
    </ligand>
</feature>
<feature type="binding site" evidence="1">
    <location>
        <position position="379"/>
    </location>
    <ligand>
        <name>substrate</name>
    </ligand>
</feature>
<feature type="binding site" evidence="1">
    <location>
        <position position="384"/>
    </location>
    <ligand>
        <name>substrate</name>
    </ligand>
</feature>
<feature type="glycosylation site" description="N-linked (GlcNAc...) asparagine" evidence="2">
    <location>
        <position position="69"/>
    </location>
</feature>
<feature type="glycosylation site" description="N-linked (GlcNAc...) asparagine" evidence="2">
    <location>
        <position position="264"/>
    </location>
</feature>
<feature type="disulfide bond" evidence="3">
    <location>
        <begin position="136"/>
        <end position="371"/>
    </location>
</feature>
<feature type="disulfide bond" evidence="3">
    <location>
        <begin position="362"/>
        <end position="439"/>
    </location>
</feature>
<feature type="disulfide bond" evidence="3">
    <location>
        <begin position="493"/>
        <end position="516"/>
    </location>
</feature>
<feature type="disulfide bond" evidence="3">
    <location>
        <begin position="539"/>
        <end position="553"/>
    </location>
</feature>
<feature type="disulfide bond" evidence="3">
    <location>
        <begin position="580"/>
        <end position="597"/>
    </location>
</feature>
<feature type="mutagenesis site" description="In SF32; induces lethality." evidence="4 5">
    <original>R</original>
    <variation>W</variation>
    <location>
        <position position="227"/>
    </location>
</feature>
<feature type="mutagenesis site" description="Abolishes glycosyltransferase activity. Not able to rescue lethality caused by SF32 mutation." evidence="8">
    <original>D</original>
    <variation>N</variation>
    <location>
        <position position="243"/>
    </location>
</feature>
<feature type="sequence conflict" description="In Ref. 1; AAM62405." evidence="12" ref="1">
    <original>I</original>
    <variation>T</variation>
    <location>
        <position position="72"/>
    </location>
</feature>
<feature type="sequence conflict" description="In Ref. 6; AAL49213." evidence="12" ref="6">
    <original>S</original>
    <variation>T</variation>
    <location>
        <position position="628"/>
    </location>
</feature>
<protein>
    <recommendedName>
        <fullName>Polypeptide N-acetylgalactosaminyltransferase 35A</fullName>
        <ecNumber evidence="4 5 6">2.4.1.41</ecNumber>
    </recommendedName>
    <alternativeName>
        <fullName>Protein l(2)35Aa</fullName>
    </alternativeName>
    <alternativeName>
        <fullName>Protein-UDP acetylgalactosaminyltransferase 35A</fullName>
    </alternativeName>
    <alternativeName>
        <fullName>UDP-GalNAc:polypeptide N-acetylgalactosaminyltransferase 35A</fullName>
        <shortName>pp-GaNTase 35A</shortName>
    </alternativeName>
    <alternativeName>
        <fullName>dGalNAc-T1</fullName>
    </alternativeName>
</protein>
<keyword id="KW-1015">Disulfide bond</keyword>
<keyword id="KW-0325">Glycoprotein</keyword>
<keyword id="KW-0328">Glycosyltransferase</keyword>
<keyword id="KW-0333">Golgi apparatus</keyword>
<keyword id="KW-0430">Lectin</keyword>
<keyword id="KW-0464">Manganese</keyword>
<keyword id="KW-0472">Membrane</keyword>
<keyword id="KW-0479">Metal-binding</keyword>
<keyword id="KW-1185">Reference proteome</keyword>
<keyword id="KW-0735">Signal-anchor</keyword>
<keyword id="KW-0808">Transferase</keyword>
<keyword id="KW-0812">Transmembrane</keyword>
<keyword id="KW-1133">Transmembrane helix</keyword>
<reference key="1">
    <citation type="journal article" date="2002" name="J. Biol. Chem.">
        <title>A UDP-GalNAc:polypeptide N-acetylgalactosaminyltransferase is essential for viability in Drosophila melanogaster.</title>
        <authorList>
            <person name="Ten Hagen K.G."/>
            <person name="Tran D.T."/>
        </authorList>
    </citation>
    <scope>NUCLEOTIDE SEQUENCE [GENOMIC DNA / MRNA]</scope>
    <scope>FUNCTION</scope>
    <scope>CATALYTIC ACTIVITY</scope>
    <scope>BIOPHYSICOCHEMICAL PROPERTIES</scope>
    <scope>PATHWAY</scope>
    <scope>DEVELOPMENTAL STAGE</scope>
    <scope>MUTAGENESIS OF ARG-227</scope>
    <source>
        <strain>Canton-S</strain>
        <tissue>Embryo</tissue>
    </source>
</reference>
<reference key="2">
    <citation type="journal article" date="2002" name="J. Biol. Chem.">
        <title>Functional conservation of subfamilies of putative UDP-N-acetylgalactosamine:polypeptide N-acetylgalactosaminyltransferases in Drosophila, Caenorhabditis elegans, and mammals. One subfamily composed of l(2)35Aa is essential in Drosophila.</title>
        <authorList>
            <person name="Schwientek T."/>
            <person name="Bennett E.P."/>
            <person name="Flores C."/>
            <person name="Thacker J."/>
            <person name="Hollmann M."/>
            <person name="Reis C.A."/>
            <person name="Behrens J."/>
            <person name="Mandel U."/>
            <person name="Keck B."/>
            <person name="Schaefer M.A."/>
            <person name="Haselmann K."/>
            <person name="Zubarev R."/>
            <person name="Roepstorff P."/>
            <person name="Burchell J.M."/>
            <person name="Taylor-Papadimitriou J."/>
            <person name="Hollingsworth M.A."/>
            <person name="Clausen H."/>
        </authorList>
    </citation>
    <scope>NUCLEOTIDE SEQUENCE [MRNA]</scope>
    <scope>FUNCTION</scope>
    <scope>CATALYTIC ACTIVITY</scope>
    <scope>PATHWAY</scope>
    <scope>TISSUE SPECIFICITY</scope>
    <scope>DEVELOPMENTAL STAGE</scope>
    <scope>MUTAGENESIS OF ARG-227</scope>
</reference>
<reference key="3">
    <citation type="journal article" date="1999" name="Genetics">
        <title>An exploration of the sequence of a 2.9-Mb region of the genome of Drosophila melanogaster: the Adh region.</title>
        <authorList>
            <person name="Ashburner M."/>
            <person name="Misra S."/>
            <person name="Roote J."/>
            <person name="Lewis S.E."/>
            <person name="Blazej R.G."/>
            <person name="Davis T."/>
            <person name="Doyle C."/>
            <person name="Galle R.F."/>
            <person name="George R.A."/>
            <person name="Harris N.L."/>
            <person name="Hartzell G."/>
            <person name="Harvey D.A."/>
            <person name="Hong L."/>
            <person name="Houston K.A."/>
            <person name="Hoskins R.A."/>
            <person name="Johnson G."/>
            <person name="Martin C."/>
            <person name="Moshrefi A.R."/>
            <person name="Palazzolo M."/>
            <person name="Reese M.G."/>
            <person name="Spradling A.C."/>
            <person name="Tsang G."/>
            <person name="Wan K.H."/>
            <person name="Whitelaw K."/>
            <person name="Celniker S.E."/>
            <person name="Rubin G.M."/>
        </authorList>
    </citation>
    <scope>NUCLEOTIDE SEQUENCE [LARGE SCALE GENOMIC DNA]</scope>
    <source>
        <strain>Berkeley</strain>
    </source>
</reference>
<reference key="4">
    <citation type="journal article" date="2000" name="Science">
        <title>The genome sequence of Drosophila melanogaster.</title>
        <authorList>
            <person name="Adams M.D."/>
            <person name="Celniker S.E."/>
            <person name="Holt R.A."/>
            <person name="Evans C.A."/>
            <person name="Gocayne J.D."/>
            <person name="Amanatides P.G."/>
            <person name="Scherer S.E."/>
            <person name="Li P.W."/>
            <person name="Hoskins R.A."/>
            <person name="Galle R.F."/>
            <person name="George R.A."/>
            <person name="Lewis S.E."/>
            <person name="Richards S."/>
            <person name="Ashburner M."/>
            <person name="Henderson S.N."/>
            <person name="Sutton G.G."/>
            <person name="Wortman J.R."/>
            <person name="Yandell M.D."/>
            <person name="Zhang Q."/>
            <person name="Chen L.X."/>
            <person name="Brandon R.C."/>
            <person name="Rogers Y.-H.C."/>
            <person name="Blazej R.G."/>
            <person name="Champe M."/>
            <person name="Pfeiffer B.D."/>
            <person name="Wan K.H."/>
            <person name="Doyle C."/>
            <person name="Baxter E.G."/>
            <person name="Helt G."/>
            <person name="Nelson C.R."/>
            <person name="Miklos G.L.G."/>
            <person name="Abril J.F."/>
            <person name="Agbayani A."/>
            <person name="An H.-J."/>
            <person name="Andrews-Pfannkoch C."/>
            <person name="Baldwin D."/>
            <person name="Ballew R.M."/>
            <person name="Basu A."/>
            <person name="Baxendale J."/>
            <person name="Bayraktaroglu L."/>
            <person name="Beasley E.M."/>
            <person name="Beeson K.Y."/>
            <person name="Benos P.V."/>
            <person name="Berman B.P."/>
            <person name="Bhandari D."/>
            <person name="Bolshakov S."/>
            <person name="Borkova D."/>
            <person name="Botchan M.R."/>
            <person name="Bouck J."/>
            <person name="Brokstein P."/>
            <person name="Brottier P."/>
            <person name="Burtis K.C."/>
            <person name="Busam D.A."/>
            <person name="Butler H."/>
            <person name="Cadieu E."/>
            <person name="Center A."/>
            <person name="Chandra I."/>
            <person name="Cherry J.M."/>
            <person name="Cawley S."/>
            <person name="Dahlke C."/>
            <person name="Davenport L.B."/>
            <person name="Davies P."/>
            <person name="de Pablos B."/>
            <person name="Delcher A."/>
            <person name="Deng Z."/>
            <person name="Mays A.D."/>
            <person name="Dew I."/>
            <person name="Dietz S.M."/>
            <person name="Dodson K."/>
            <person name="Doup L.E."/>
            <person name="Downes M."/>
            <person name="Dugan-Rocha S."/>
            <person name="Dunkov B.C."/>
            <person name="Dunn P."/>
            <person name="Durbin K.J."/>
            <person name="Evangelista C.C."/>
            <person name="Ferraz C."/>
            <person name="Ferriera S."/>
            <person name="Fleischmann W."/>
            <person name="Fosler C."/>
            <person name="Gabrielian A.E."/>
            <person name="Garg N.S."/>
            <person name="Gelbart W.M."/>
            <person name="Glasser K."/>
            <person name="Glodek A."/>
            <person name="Gong F."/>
            <person name="Gorrell J.H."/>
            <person name="Gu Z."/>
            <person name="Guan P."/>
            <person name="Harris M."/>
            <person name="Harris N.L."/>
            <person name="Harvey D.A."/>
            <person name="Heiman T.J."/>
            <person name="Hernandez J.R."/>
            <person name="Houck J."/>
            <person name="Hostin D."/>
            <person name="Houston K.A."/>
            <person name="Howland T.J."/>
            <person name="Wei M.-H."/>
            <person name="Ibegwam C."/>
            <person name="Jalali M."/>
            <person name="Kalush F."/>
            <person name="Karpen G.H."/>
            <person name="Ke Z."/>
            <person name="Kennison J.A."/>
            <person name="Ketchum K.A."/>
            <person name="Kimmel B.E."/>
            <person name="Kodira C.D."/>
            <person name="Kraft C.L."/>
            <person name="Kravitz S."/>
            <person name="Kulp D."/>
            <person name="Lai Z."/>
            <person name="Lasko P."/>
            <person name="Lei Y."/>
            <person name="Levitsky A.A."/>
            <person name="Li J.H."/>
            <person name="Li Z."/>
            <person name="Liang Y."/>
            <person name="Lin X."/>
            <person name="Liu X."/>
            <person name="Mattei B."/>
            <person name="McIntosh T.C."/>
            <person name="McLeod M.P."/>
            <person name="McPherson D."/>
            <person name="Merkulov G."/>
            <person name="Milshina N.V."/>
            <person name="Mobarry C."/>
            <person name="Morris J."/>
            <person name="Moshrefi A."/>
            <person name="Mount S.M."/>
            <person name="Moy M."/>
            <person name="Murphy B."/>
            <person name="Murphy L."/>
            <person name="Muzny D.M."/>
            <person name="Nelson D.L."/>
            <person name="Nelson D.R."/>
            <person name="Nelson K.A."/>
            <person name="Nixon K."/>
            <person name="Nusskern D.R."/>
            <person name="Pacleb J.M."/>
            <person name="Palazzolo M."/>
            <person name="Pittman G.S."/>
            <person name="Pan S."/>
            <person name="Pollard J."/>
            <person name="Puri V."/>
            <person name="Reese M.G."/>
            <person name="Reinert K."/>
            <person name="Remington K."/>
            <person name="Saunders R.D.C."/>
            <person name="Scheeler F."/>
            <person name="Shen H."/>
            <person name="Shue B.C."/>
            <person name="Siden-Kiamos I."/>
            <person name="Simpson M."/>
            <person name="Skupski M.P."/>
            <person name="Smith T.J."/>
            <person name="Spier E."/>
            <person name="Spradling A.C."/>
            <person name="Stapleton M."/>
            <person name="Strong R."/>
            <person name="Sun E."/>
            <person name="Svirskas R."/>
            <person name="Tector C."/>
            <person name="Turner R."/>
            <person name="Venter E."/>
            <person name="Wang A.H."/>
            <person name="Wang X."/>
            <person name="Wang Z.-Y."/>
            <person name="Wassarman D.A."/>
            <person name="Weinstock G.M."/>
            <person name="Weissenbach J."/>
            <person name="Williams S.M."/>
            <person name="Woodage T."/>
            <person name="Worley K.C."/>
            <person name="Wu D."/>
            <person name="Yang S."/>
            <person name="Yao Q.A."/>
            <person name="Ye J."/>
            <person name="Yeh R.-F."/>
            <person name="Zaveri J.S."/>
            <person name="Zhan M."/>
            <person name="Zhang G."/>
            <person name="Zhao Q."/>
            <person name="Zheng L."/>
            <person name="Zheng X.H."/>
            <person name="Zhong F.N."/>
            <person name="Zhong W."/>
            <person name="Zhou X."/>
            <person name="Zhu S.C."/>
            <person name="Zhu X."/>
            <person name="Smith H.O."/>
            <person name="Gibbs R.A."/>
            <person name="Myers E.W."/>
            <person name="Rubin G.M."/>
            <person name="Venter J.C."/>
        </authorList>
    </citation>
    <scope>NUCLEOTIDE SEQUENCE [LARGE SCALE GENOMIC DNA]</scope>
    <source>
        <strain>Berkeley</strain>
    </source>
</reference>
<reference key="5">
    <citation type="journal article" date="2002" name="Genome Biol.">
        <title>Annotation of the Drosophila melanogaster euchromatic genome: a systematic review.</title>
        <authorList>
            <person name="Misra S."/>
            <person name="Crosby M.A."/>
            <person name="Mungall C.J."/>
            <person name="Matthews B.B."/>
            <person name="Campbell K.S."/>
            <person name="Hradecky P."/>
            <person name="Huang Y."/>
            <person name="Kaminker J.S."/>
            <person name="Millburn G.H."/>
            <person name="Prochnik S.E."/>
            <person name="Smith C.D."/>
            <person name="Tupy J.L."/>
            <person name="Whitfield E.J."/>
            <person name="Bayraktaroglu L."/>
            <person name="Berman B.P."/>
            <person name="Bettencourt B.R."/>
            <person name="Celniker S.E."/>
            <person name="de Grey A.D.N.J."/>
            <person name="Drysdale R.A."/>
            <person name="Harris N.L."/>
            <person name="Richter J."/>
            <person name="Russo S."/>
            <person name="Schroeder A.J."/>
            <person name="Shu S.Q."/>
            <person name="Stapleton M."/>
            <person name="Yamada C."/>
            <person name="Ashburner M."/>
            <person name="Gelbart W.M."/>
            <person name="Rubin G.M."/>
            <person name="Lewis S.E."/>
        </authorList>
    </citation>
    <scope>GENOME REANNOTATION</scope>
    <source>
        <strain>Berkeley</strain>
    </source>
</reference>
<reference key="6">
    <citation type="journal article" date="2002" name="Genome Biol.">
        <title>A Drosophila full-length cDNA resource.</title>
        <authorList>
            <person name="Stapleton M."/>
            <person name="Carlson J.W."/>
            <person name="Brokstein P."/>
            <person name="Yu C."/>
            <person name="Champe M."/>
            <person name="George R.A."/>
            <person name="Guarin H."/>
            <person name="Kronmiller B."/>
            <person name="Pacleb J.M."/>
            <person name="Park S."/>
            <person name="Wan K.H."/>
            <person name="Rubin G.M."/>
            <person name="Celniker S.E."/>
        </authorList>
    </citation>
    <scope>NUCLEOTIDE SEQUENCE [LARGE SCALE MRNA]</scope>
    <source>
        <strain>Berkeley</strain>
        <tissue>Embryo</tissue>
    </source>
</reference>
<reference key="7">
    <citation type="journal article" date="2003" name="J. Biol. Chem.">
        <title>Functional characterization and expression analysis of members of the UDP-GalNAc:polypeptide N-acetylgalactosaminyltransferase family from Drosophila melanogaster.</title>
        <authorList>
            <person name="Ten Hagen K.G."/>
            <person name="Tran D.T."/>
            <person name="Gerken T.A."/>
            <person name="Stein D.S."/>
            <person name="Zhang Z."/>
        </authorList>
    </citation>
    <scope>FUNCTION</scope>
    <scope>CATALYTIC ACTIVITY</scope>
    <scope>PATHWAY</scope>
    <scope>DEVELOPMENTAL STAGE</scope>
    <source>
        <strain>Canton-S</strain>
        <tissue>Embryo</tissue>
    </source>
</reference>
<reference key="8">
    <citation type="journal article" date="2006" name="Glycobiology">
        <title>Expression of the UDP-GalNAc: polypeptide N-acetylgalactosaminyltransferase family is spatially and temporally regulated during Drosophila development.</title>
        <authorList>
            <person name="Tian E."/>
            <person name="Ten Hagen K.G."/>
        </authorList>
    </citation>
    <scope>FUNCTION</scope>
    <scope>TISSUE SPECIFICITY</scope>
    <scope>DEVELOPMENTAL STAGE</scope>
</reference>
<reference key="9">
    <citation type="journal article" date="2007" name="Glycobiology">
        <title>Identification of N-glycosylated proteins from the central nervous system of Drosophila melanogaster.</title>
        <authorList>
            <person name="Koles K."/>
            <person name="Lim J.-M."/>
            <person name="Aoki K."/>
            <person name="Porterfield M."/>
            <person name="Tiemeyer M."/>
            <person name="Wells L."/>
            <person name="Panin V."/>
        </authorList>
    </citation>
    <scope>IDENTIFICATION BY MASS SPECTROMETRY</scope>
    <source>
        <strain>Oregon-R</strain>
        <tissue>Head</tissue>
    </source>
</reference>
<reference key="10">
    <citation type="journal article" date="2010" name="Glycoconj. J.">
        <title>Rescue of Drosophila Melanogaster l(2)35Aa lethality is only mediated by polypeptide GalNAc-transferase pgant35A, but not by the evolutionary conserved human ortholog GalNAc-transferase-T11.</title>
        <authorList>
            <person name="Bennett E.P."/>
            <person name="Chen Y.W."/>
            <person name="Schwientek T."/>
            <person name="Mandel U."/>
            <person name="Schjoldager K.T."/>
            <person name="Cohen S.M."/>
            <person name="Clausen H."/>
        </authorList>
    </citation>
    <scope>MUTAGENESIS OF ASP-243</scope>
</reference>
<reference key="11">
    <citation type="journal article" date="2010" name="J. Biol. Chem.">
        <title>Dissecting the biological role of mucin-type O-glycosylation using RNA interference in Drosophila cell culture.</title>
        <authorList>
            <person name="Zhang L."/>
            <person name="Ten Hagen K.G."/>
        </authorList>
    </citation>
    <scope>FUNCTION</scope>
</reference>
<reference key="12">
    <citation type="journal article" date="2012" name="J. Biol. Chem.">
        <title>Multiple members of the UDP-GalNAc: polypeptide N-acetylgalactosaminyltransferase family are essential for viability in Drosophila.</title>
        <authorList>
            <person name="Tran D.T."/>
            <person name="Zhang L."/>
            <person name="Zhang Y."/>
            <person name="Tian E."/>
            <person name="Earl L.A."/>
            <person name="Ten Hagen K.G."/>
        </authorList>
    </citation>
    <scope>DISRUPTION PHENOTYPE</scope>
</reference>
<reference key="13">
    <citation type="journal article" date="2014" name="J. Neurosci.">
        <title>Two protein N-acetylgalactosaminyl transferases regulate synaptic plasticity by activity-dependent regulation of integrin signaling.</title>
        <authorList>
            <person name="Dani N."/>
            <person name="Zhu H."/>
            <person name="Broadie K."/>
        </authorList>
    </citation>
    <scope>FUNCTION</scope>
    <scope>DISRUPTION PHENOTYPE</scope>
</reference>
<dbReference type="EC" id="2.4.1.41" evidence="4 5 6"/>
<dbReference type="EMBL" id="AF478697">
    <property type="protein sequence ID" value="AAM62405.1"/>
    <property type="molecule type" value="mRNA"/>
</dbReference>
<dbReference type="EMBL" id="AF478698">
    <property type="protein sequence ID" value="AAM62406.1"/>
    <property type="molecule type" value="Genomic_DNA"/>
</dbReference>
<dbReference type="EMBL" id="AF478699">
    <property type="protein sequence ID" value="AAM62407.1"/>
    <property type="molecule type" value="Genomic_DNA"/>
</dbReference>
<dbReference type="EMBL" id="AF478700">
    <property type="protein sequence ID" value="AAM62408.1"/>
    <property type="molecule type" value="Genomic_DNA"/>
</dbReference>
<dbReference type="EMBL" id="AF158747">
    <property type="protein sequence ID" value="AAK66862.1"/>
    <property type="status" value="ALT_INIT"/>
    <property type="molecule type" value="mRNA"/>
</dbReference>
<dbReference type="EMBL" id="AE014134">
    <property type="protein sequence ID" value="AAF53391.1"/>
    <property type="molecule type" value="Genomic_DNA"/>
</dbReference>
<dbReference type="EMBL" id="AY071591">
    <property type="protein sequence ID" value="AAL49213.1"/>
    <property type="molecule type" value="mRNA"/>
</dbReference>
<dbReference type="RefSeq" id="NP_652069.2">
    <property type="nucleotide sequence ID" value="NM_143812.4"/>
</dbReference>
<dbReference type="SMR" id="Q8MVS5"/>
<dbReference type="BioGRID" id="71677">
    <property type="interactions" value="4"/>
</dbReference>
<dbReference type="FunCoup" id="Q8MVS5">
    <property type="interactions" value="337"/>
</dbReference>
<dbReference type="IntAct" id="Q8MVS5">
    <property type="interactions" value="3"/>
</dbReference>
<dbReference type="STRING" id="7227.FBpp0080202"/>
<dbReference type="CAZy" id="CBM13">
    <property type="family name" value="Carbohydrate-Binding Module Family 13"/>
</dbReference>
<dbReference type="CAZy" id="GT27">
    <property type="family name" value="Glycosyltransferase Family 27"/>
</dbReference>
<dbReference type="GlyCosmos" id="Q8MVS5">
    <property type="glycosylation" value="2 sites, No reported glycans"/>
</dbReference>
<dbReference type="GlyGen" id="Q8MVS5">
    <property type="glycosylation" value="3 sites"/>
</dbReference>
<dbReference type="PaxDb" id="7227-FBpp0080202"/>
<dbReference type="DNASU" id="48775"/>
<dbReference type="EnsemblMetazoa" id="FBtr0080629">
    <property type="protein sequence ID" value="FBpp0080202"/>
    <property type="gene ID" value="FBgn0001970"/>
</dbReference>
<dbReference type="GeneID" id="48775"/>
<dbReference type="KEGG" id="dme:Dmel_CG7480"/>
<dbReference type="AGR" id="FB:FBgn0001970"/>
<dbReference type="CTD" id="48775"/>
<dbReference type="FlyBase" id="FBgn0001970">
    <property type="gene designation" value="Pgant35A"/>
</dbReference>
<dbReference type="VEuPathDB" id="VectorBase:FBgn0001970"/>
<dbReference type="eggNOG" id="KOG3736">
    <property type="taxonomic scope" value="Eukaryota"/>
</dbReference>
<dbReference type="GeneTree" id="ENSGT00940000165841"/>
<dbReference type="HOGENOM" id="CLU_013477_0_1_1"/>
<dbReference type="InParanoid" id="Q8MVS5"/>
<dbReference type="OMA" id="PVFQPWH"/>
<dbReference type="OrthoDB" id="9982049at2759"/>
<dbReference type="PhylomeDB" id="Q8MVS5"/>
<dbReference type="BRENDA" id="2.4.1.41">
    <property type="organism ID" value="1994"/>
</dbReference>
<dbReference type="Reactome" id="R-DME-913709">
    <property type="pathway name" value="O-linked glycosylation of mucins"/>
</dbReference>
<dbReference type="SABIO-RK" id="Q8MVS5"/>
<dbReference type="UniPathway" id="UPA00378"/>
<dbReference type="BioGRID-ORCS" id="48775">
    <property type="hits" value="0 hits in 1 CRISPR screen"/>
</dbReference>
<dbReference type="GenomeRNAi" id="48775"/>
<dbReference type="PRO" id="PR:Q8MVS5"/>
<dbReference type="Proteomes" id="UP000000803">
    <property type="component" value="Chromosome 2L"/>
</dbReference>
<dbReference type="Bgee" id="FBgn0001970">
    <property type="expression patterns" value="Expressed in hindgut proper primordium (Drosophila) and 46 other cell types or tissues"/>
</dbReference>
<dbReference type="ExpressionAtlas" id="Q8MVS5">
    <property type="expression patterns" value="baseline and differential"/>
</dbReference>
<dbReference type="GO" id="GO:0005794">
    <property type="term" value="C:Golgi apparatus"/>
    <property type="evidence" value="ECO:0000318"/>
    <property type="project" value="GO_Central"/>
</dbReference>
<dbReference type="GO" id="GO:0000139">
    <property type="term" value="C:Golgi membrane"/>
    <property type="evidence" value="ECO:0000304"/>
    <property type="project" value="FlyBase"/>
</dbReference>
<dbReference type="GO" id="GO:0005795">
    <property type="term" value="C:Golgi stack"/>
    <property type="evidence" value="ECO:0000303"/>
    <property type="project" value="UniProtKB"/>
</dbReference>
<dbReference type="GO" id="GO:0030246">
    <property type="term" value="F:carbohydrate binding"/>
    <property type="evidence" value="ECO:0007669"/>
    <property type="project" value="UniProtKB-KW"/>
</dbReference>
<dbReference type="GO" id="GO:0046872">
    <property type="term" value="F:metal ion binding"/>
    <property type="evidence" value="ECO:0007669"/>
    <property type="project" value="UniProtKB-KW"/>
</dbReference>
<dbReference type="GO" id="GO:0005112">
    <property type="term" value="F:Notch binding"/>
    <property type="evidence" value="ECO:0000318"/>
    <property type="project" value="GO_Central"/>
</dbReference>
<dbReference type="GO" id="GO:0004653">
    <property type="term" value="F:polypeptide N-acetylgalactosaminyltransferase activity"/>
    <property type="evidence" value="ECO:0000314"/>
    <property type="project" value="UniProtKB"/>
</dbReference>
<dbReference type="GO" id="GO:0007424">
    <property type="term" value="P:open tracheal system development"/>
    <property type="evidence" value="ECO:0000315"/>
    <property type="project" value="FlyBase"/>
</dbReference>
<dbReference type="GO" id="GO:0006493">
    <property type="term" value="P:protein O-linked glycosylation"/>
    <property type="evidence" value="ECO:0000314"/>
    <property type="project" value="UniProtKB"/>
</dbReference>
<dbReference type="GO" id="GO:0008593">
    <property type="term" value="P:regulation of Notch signaling pathway"/>
    <property type="evidence" value="ECO:0000318"/>
    <property type="project" value="GO_Central"/>
</dbReference>
<dbReference type="CDD" id="cd23440">
    <property type="entry name" value="beta-trefoil_Ricin_GALNT11"/>
    <property type="match status" value="1"/>
</dbReference>
<dbReference type="CDD" id="cd02510">
    <property type="entry name" value="pp-GalNAc-T"/>
    <property type="match status" value="1"/>
</dbReference>
<dbReference type="FunFam" id="2.80.10.50:FF:000075">
    <property type="entry name" value="Polypeptide N-acetylgalactosaminyltransferase"/>
    <property type="match status" value="1"/>
</dbReference>
<dbReference type="FunFam" id="3.90.550.10:FF:000053">
    <property type="entry name" value="Polypeptide N-acetylgalactosaminyltransferase"/>
    <property type="match status" value="1"/>
</dbReference>
<dbReference type="Gene3D" id="2.80.10.50">
    <property type="match status" value="1"/>
</dbReference>
<dbReference type="Gene3D" id="3.90.550.10">
    <property type="entry name" value="Spore Coat Polysaccharide Biosynthesis Protein SpsA, Chain A"/>
    <property type="match status" value="1"/>
</dbReference>
<dbReference type="InterPro" id="IPR045885">
    <property type="entry name" value="GalNAc-T"/>
</dbReference>
<dbReference type="InterPro" id="IPR001173">
    <property type="entry name" value="Glyco_trans_2-like"/>
</dbReference>
<dbReference type="InterPro" id="IPR029044">
    <property type="entry name" value="Nucleotide-diphossugar_trans"/>
</dbReference>
<dbReference type="InterPro" id="IPR035992">
    <property type="entry name" value="Ricin_B-like_lectins"/>
</dbReference>
<dbReference type="InterPro" id="IPR000772">
    <property type="entry name" value="Ricin_B_lectin"/>
</dbReference>
<dbReference type="PANTHER" id="PTHR11675">
    <property type="entry name" value="N-ACETYLGALACTOSAMINYLTRANSFERASE"/>
    <property type="match status" value="1"/>
</dbReference>
<dbReference type="PANTHER" id="PTHR11675:SF63">
    <property type="entry name" value="POLYPEPTIDE N-ACETYLGALACTOSAMINYLTRANSFERASE"/>
    <property type="match status" value="1"/>
</dbReference>
<dbReference type="Pfam" id="PF00535">
    <property type="entry name" value="Glycos_transf_2"/>
    <property type="match status" value="1"/>
</dbReference>
<dbReference type="Pfam" id="PF00652">
    <property type="entry name" value="Ricin_B_lectin"/>
    <property type="match status" value="1"/>
</dbReference>
<dbReference type="SMART" id="SM00458">
    <property type="entry name" value="RICIN"/>
    <property type="match status" value="1"/>
</dbReference>
<dbReference type="SUPFAM" id="SSF53448">
    <property type="entry name" value="Nucleotide-diphospho-sugar transferases"/>
    <property type="match status" value="1"/>
</dbReference>
<dbReference type="SUPFAM" id="SSF50370">
    <property type="entry name" value="Ricin B-like lectins"/>
    <property type="match status" value="1"/>
</dbReference>
<dbReference type="PROSITE" id="PS50231">
    <property type="entry name" value="RICIN_B_LECTIN"/>
    <property type="match status" value="1"/>
</dbReference>
<organism>
    <name type="scientific">Drosophila melanogaster</name>
    <name type="common">Fruit fly</name>
    <dbReference type="NCBI Taxonomy" id="7227"/>
    <lineage>
        <taxon>Eukaryota</taxon>
        <taxon>Metazoa</taxon>
        <taxon>Ecdysozoa</taxon>
        <taxon>Arthropoda</taxon>
        <taxon>Hexapoda</taxon>
        <taxon>Insecta</taxon>
        <taxon>Pterygota</taxon>
        <taxon>Neoptera</taxon>
        <taxon>Endopterygota</taxon>
        <taxon>Diptera</taxon>
        <taxon>Brachycera</taxon>
        <taxon>Muscomorpha</taxon>
        <taxon>Ephydroidea</taxon>
        <taxon>Drosophilidae</taxon>
        <taxon>Drosophila</taxon>
        <taxon>Sophophora</taxon>
    </lineage>
</organism>
<proteinExistence type="evidence at protein level"/>
<accession>Q8MVS5</accession>
<accession>Q8MVS2</accession>
<accession>Q8MVS3</accession>
<accession>Q8MVS4</accession>
<accession>Q8SYF1</accession>
<accession>Q965E4</accession>
<accession>Q9V3C9</accession>
<name>GLT35_DROME</name>
<comment type="function">
    <text evidence="5 6 7 9 11">Polypeptide N-acetylgalactosaminyltransferases catalyze the transfer of an N-acetyl-D-galactosamine residue to a serine or threonine residue on the protein receptor (PubMed:11925450, PubMed:12829714). Displays the same enzyme activity toward MUC1, MUC4, and EA2 (PubMed:11925450, PubMed:12829714). Not involved in glycosylation of erythropoietin (EPO) (PubMed:11925450). It can both act as a peptide transferase that transfers GalNAc onto unmodified peptide substrates, and as a glycopeptide transferase that requires the prior addition of a GalNAc on a peptide before adding additional GalNAc moieties (PubMed:11925450, PubMed:12829714). Protein modification by this enzyme might be important for cytokinesis and tube formation during embryogenesis (PubMed:16251381, PubMed:20807760). Together with Pgant3, regulates integrin levels and activity-dependent integrin signaling at the synapse in neurons and muscles (PubMed:25253852).</text>
</comment>
<comment type="catalytic activity">
    <reaction evidence="4 5 6">
        <text>L-seryl-[protein] + UDP-N-acetyl-alpha-D-galactosamine = a 3-O-[N-acetyl-alpha-D-galactosaminyl]-L-seryl-[protein] + UDP + H(+)</text>
        <dbReference type="Rhea" id="RHEA:23956"/>
        <dbReference type="Rhea" id="RHEA-COMP:9863"/>
        <dbReference type="Rhea" id="RHEA-COMP:12788"/>
        <dbReference type="ChEBI" id="CHEBI:15378"/>
        <dbReference type="ChEBI" id="CHEBI:29999"/>
        <dbReference type="ChEBI" id="CHEBI:53604"/>
        <dbReference type="ChEBI" id="CHEBI:58223"/>
        <dbReference type="ChEBI" id="CHEBI:67138"/>
        <dbReference type="EC" id="2.4.1.41"/>
    </reaction>
</comment>
<comment type="catalytic activity">
    <reaction evidence="4 5 6">
        <text>L-threonyl-[protein] + UDP-N-acetyl-alpha-D-galactosamine = a 3-O-[N-acetyl-alpha-D-galactosaminyl]-L-threonyl-[protein] + UDP + H(+)</text>
        <dbReference type="Rhea" id="RHEA:52424"/>
        <dbReference type="Rhea" id="RHEA-COMP:11060"/>
        <dbReference type="Rhea" id="RHEA-COMP:11689"/>
        <dbReference type="ChEBI" id="CHEBI:15378"/>
        <dbReference type="ChEBI" id="CHEBI:30013"/>
        <dbReference type="ChEBI" id="CHEBI:58223"/>
        <dbReference type="ChEBI" id="CHEBI:67138"/>
        <dbReference type="ChEBI" id="CHEBI:87075"/>
        <dbReference type="EC" id="2.4.1.41"/>
    </reaction>
</comment>
<comment type="cofactor">
    <cofactor evidence="1">
        <name>Mn(2+)</name>
        <dbReference type="ChEBI" id="CHEBI:29035"/>
    </cofactor>
</comment>
<comment type="biophysicochemical properties">
    <kinetics>
        <KM evidence="4">8.5 uM for UDP-GalNAc</KM>
        <KM evidence="4">0.35 mM for EA2 acceptor peptide</KM>
    </kinetics>
</comment>
<comment type="pathway">
    <text evidence="13 14 15">Protein modification; protein glycosylation.</text>
</comment>
<comment type="subcellular location">
    <subcellularLocation>
        <location evidence="1">Golgi apparatus membrane</location>
        <topology evidence="1">Single-pass type II membrane protein</topology>
    </subcellularLocation>
</comment>
<comment type="tissue specificity">
    <text evidence="5 7">Expressed at high level in ovaries. Expressed at low level in testis. Expressed at higher level in adult females than males. During oogenesis, it is detected in germ cells and follicle epithelia of all developmental stages. Initially expressed during early stages of oogenesis in region I and reaches high levels in regions IIa and IIb of the germarium. Highly expressed in stage 2 egg chambers. Remains highly expressed during later stages of oogenesis. During embryonic stages 9-11, expressed in the primordium of the foregut, midgut and hindgut. Expressed in salivary glands from embryonic stage 12 onwards. During embryonic stages 12-13, expressed in the posterior midgut and hindgut. During embryonic stages 14-15, expression continues in the hindgut. During embryonic stages 16-17, expressed in the dorsal longitudinal trachea and posterior spiracles. In third instar larvae, ubiquitously expressed in wing, eye-antennal, leg and haltere imaginal disks.</text>
</comment>
<comment type="developmental stage">
    <text evidence="4 5 6 7">Expressed both maternally and zygotically. Expressed throughout embryonic, larval, pupal and adult stages, with increasing levels during larval development.</text>
</comment>
<comment type="domain">
    <text evidence="1">There are two conserved domains in the glycosyltransferase region: the N-terminal domain (domain A, also called GT1 motif), which is probably involved in manganese coordination and substrate binding and the C-terminal domain (domain B, also called Gal/GalNAc-T motif), which is probably involved in catalytic reaction and UDP-Gal binding.</text>
</comment>
<comment type="domain">
    <text evidence="1">The ricin B-type lectin domain binds to GalNAc and contributes to the glycopeptide specificity.</text>
</comment>
<comment type="disruption phenotype">
    <text evidence="10 11">Mutant larval shows down-regulation of synaptic O-linked glycosylation, integrin level and signaling via Ten-m and if. Synapses show smaller synaptic boutons, expanded activity-dependent postsynaptic pockets which affect synaptic plasticity and synaptic strength in both the pre-synaptic and post-synaptic assembly, no differences in neuromuscular junction morphology (PubMed:25253852). Simultaneous knockout of Pgant3, restores normal synaptic strength (PubMed:25253852). RNAi-mediated knockdown is lethal (PubMed:22157008). RNAi-mediated knockdown in the mesoderm, respiratory system, digestive system or reproductive tract results in a reduction in viability (PubMed:22157008).</text>
</comment>
<comment type="miscellaneous">
    <text evidence="16">The human ortholog GALNT11 (AC Q8NCW6) is not able to rescue lethality caused by the SF32 mutation.</text>
</comment>
<comment type="similarity">
    <text evidence="12">Belongs to the glycosyltransferase 2 family. GalNAc-T subfamily.</text>
</comment>
<comment type="sequence caution" evidence="12">
    <conflict type="erroneous initiation">
        <sequence resource="EMBL-CDS" id="AAK66862"/>
    </conflict>
    <text>Truncated N-terminus.</text>
</comment>